<organism>
    <name type="scientific">Halorhabdus utahensis (strain DSM 12940 / JCM 11049 / AX-2)</name>
    <dbReference type="NCBI Taxonomy" id="519442"/>
    <lineage>
        <taxon>Archaea</taxon>
        <taxon>Methanobacteriati</taxon>
        <taxon>Methanobacteriota</taxon>
        <taxon>Stenosarchaea group</taxon>
        <taxon>Halobacteria</taxon>
        <taxon>Halobacteriales</taxon>
        <taxon>Haloarculaceae</taxon>
        <taxon>Halorhabdus</taxon>
    </lineage>
</organism>
<evidence type="ECO:0000255" key="1">
    <source>
        <dbReference type="HAMAP-Rule" id="MF_02113"/>
    </source>
</evidence>
<evidence type="ECO:0000256" key="2">
    <source>
        <dbReference type="SAM" id="MobiDB-lite"/>
    </source>
</evidence>
<keyword id="KW-0068">Autocatalytic cleavage</keyword>
<keyword id="KW-0963">Cytoplasm</keyword>
<keyword id="KW-0378">Hydrolase</keyword>
<keyword id="KW-0645">Protease</keyword>
<keyword id="KW-0647">Proteasome</keyword>
<keyword id="KW-1185">Reference proteome</keyword>
<keyword id="KW-0888">Threonine protease</keyword>
<keyword id="KW-0865">Zymogen</keyword>
<protein>
    <recommendedName>
        <fullName evidence="1">Proteasome subunit beta</fullName>
        <ecNumber evidence="1">3.4.25.1</ecNumber>
    </recommendedName>
    <alternativeName>
        <fullName evidence="1">20S proteasome beta subunit</fullName>
    </alternativeName>
    <alternativeName>
        <fullName evidence="1">Proteasome core protein PsmB</fullName>
    </alternativeName>
</protein>
<accession>C7NQ99</accession>
<name>PSB_HALUD</name>
<comment type="function">
    <text evidence="1">Component of the proteasome core, a large protease complex with broad specificity involved in protein degradation.</text>
</comment>
<comment type="catalytic activity">
    <reaction evidence="1">
        <text>Cleavage of peptide bonds with very broad specificity.</text>
        <dbReference type="EC" id="3.4.25.1"/>
    </reaction>
</comment>
<comment type="activity regulation">
    <text evidence="1">The formation of the proteasomal ATPase PAN-20S proteasome complex, via the docking of the C-termini of PAN into the intersubunit pockets in the alpha-rings, triggers opening of the gate for substrate entry. Interconversion between the open-gate and close-gate conformations leads to a dynamic regulation of the 20S proteasome proteolysis activity.</text>
</comment>
<comment type="subunit">
    <text evidence="1">The 20S proteasome core is composed of 14 alpha and 14 beta subunits that assemble into four stacked heptameric rings, resulting in a barrel-shaped structure. The two inner rings, each composed of seven catalytic beta subunits, are sandwiched by two outer rings, each composed of seven alpha subunits. The catalytic chamber with the active sites is on the inside of the barrel. Has a gated structure, the ends of the cylinder being occluded by the N-termini of the alpha-subunits. Is capped at one or both ends by the proteasome regulatory ATPase, PAN.</text>
</comment>
<comment type="subcellular location">
    <subcellularLocation>
        <location evidence="1">Cytoplasm</location>
    </subcellularLocation>
</comment>
<comment type="similarity">
    <text evidence="1">Belongs to the peptidase T1B family.</text>
</comment>
<gene>
    <name evidence="1" type="primary">psmB</name>
    <name type="ordered locus">Huta_2664</name>
</gene>
<sequence>MNPDLNMNPHDSGRTDPYAPELGEIATDEGDGENVTKTGTTTVGLATEEGVVIATDRRASLGGRFVSNKNVVKVEEIHPTAAMTLVGSVGGAQSFIRTLRSEASLYETRRDEPMSINALATLAGNFARGGPFLAIHPILGGVDDEGSHVYTIDPAGGVMEDDYAVTGSGMQVAYGTIEGEYESDLSTEEAKELATNAVQAASERDTGSGNGLVIAEITDEGVEIEEFDDLADAL</sequence>
<reference key="1">
    <citation type="journal article" date="2009" name="Stand. Genomic Sci.">
        <title>Complete genome sequence of Halorhabdus utahensis type strain (AX-2).</title>
        <authorList>
            <person name="Anderson I."/>
            <person name="Tindall B.J."/>
            <person name="Pomrenke H."/>
            <person name="Goker M."/>
            <person name="Lapidus A."/>
            <person name="Nolan M."/>
            <person name="Copeland A."/>
            <person name="Glavina Del Rio T."/>
            <person name="Chen F."/>
            <person name="Tice H."/>
            <person name="Cheng J.F."/>
            <person name="Lucas S."/>
            <person name="Chertkov O."/>
            <person name="Bruce D."/>
            <person name="Brettin T."/>
            <person name="Detter J.C."/>
            <person name="Han C."/>
            <person name="Goodwin L."/>
            <person name="Land M."/>
            <person name="Hauser L."/>
            <person name="Chang Y.J."/>
            <person name="Jeffries C.D."/>
            <person name="Pitluck S."/>
            <person name="Pati A."/>
            <person name="Mavromatis K."/>
            <person name="Ivanova N."/>
            <person name="Ovchinnikova G."/>
            <person name="Chen A."/>
            <person name="Palaniappan K."/>
            <person name="Chain P."/>
            <person name="Rohde M."/>
            <person name="Bristow J."/>
            <person name="Eisen J.A."/>
            <person name="Markowitz V."/>
            <person name="Hugenholtz P."/>
            <person name="Kyrpides N.C."/>
            <person name="Klenk H.P."/>
        </authorList>
    </citation>
    <scope>NUCLEOTIDE SEQUENCE [LARGE SCALE GENOMIC DNA]</scope>
    <source>
        <strain>DSM 12940 / JCM 11049 / AX-2</strain>
    </source>
</reference>
<proteinExistence type="inferred from homology"/>
<dbReference type="EC" id="3.4.25.1" evidence="1"/>
<dbReference type="EMBL" id="CP001687">
    <property type="protein sequence ID" value="ACV12825.1"/>
    <property type="molecule type" value="Genomic_DNA"/>
</dbReference>
<dbReference type="RefSeq" id="WP_015790387.1">
    <property type="nucleotide sequence ID" value="NC_013158.1"/>
</dbReference>
<dbReference type="SMR" id="C7NQ99"/>
<dbReference type="STRING" id="519442.Huta_2664"/>
<dbReference type="MEROPS" id="T01.002"/>
<dbReference type="GeneID" id="8384969"/>
<dbReference type="KEGG" id="hut:Huta_2664"/>
<dbReference type="eggNOG" id="arCOG00970">
    <property type="taxonomic scope" value="Archaea"/>
</dbReference>
<dbReference type="HOGENOM" id="CLU_035750_7_2_2"/>
<dbReference type="Proteomes" id="UP000002071">
    <property type="component" value="Chromosome"/>
</dbReference>
<dbReference type="GO" id="GO:0005737">
    <property type="term" value="C:cytoplasm"/>
    <property type="evidence" value="ECO:0007669"/>
    <property type="project" value="UniProtKB-SubCell"/>
</dbReference>
<dbReference type="GO" id="GO:0019774">
    <property type="term" value="C:proteasome core complex, beta-subunit complex"/>
    <property type="evidence" value="ECO:0007669"/>
    <property type="project" value="UniProtKB-UniRule"/>
</dbReference>
<dbReference type="GO" id="GO:0004298">
    <property type="term" value="F:threonine-type endopeptidase activity"/>
    <property type="evidence" value="ECO:0007669"/>
    <property type="project" value="UniProtKB-UniRule"/>
</dbReference>
<dbReference type="GO" id="GO:0010498">
    <property type="term" value="P:proteasomal protein catabolic process"/>
    <property type="evidence" value="ECO:0007669"/>
    <property type="project" value="UniProtKB-UniRule"/>
</dbReference>
<dbReference type="Gene3D" id="3.60.20.10">
    <property type="entry name" value="Glutamine Phosphoribosylpyrophosphate, subunit 1, domain 1"/>
    <property type="match status" value="1"/>
</dbReference>
<dbReference type="HAMAP" id="MF_02113_A">
    <property type="entry name" value="Proteasome_B_A"/>
    <property type="match status" value="1"/>
</dbReference>
<dbReference type="InterPro" id="IPR029055">
    <property type="entry name" value="Ntn_hydrolases_N"/>
</dbReference>
<dbReference type="InterPro" id="IPR019983">
    <property type="entry name" value="Pept_T1A_Psome_bsu_arc"/>
</dbReference>
<dbReference type="InterPro" id="IPR000243">
    <property type="entry name" value="Pept_T1A_subB"/>
</dbReference>
<dbReference type="InterPro" id="IPR001353">
    <property type="entry name" value="Proteasome_sua/b"/>
</dbReference>
<dbReference type="InterPro" id="IPR023333">
    <property type="entry name" value="Proteasome_suB-type"/>
</dbReference>
<dbReference type="NCBIfam" id="TIGR03634">
    <property type="entry name" value="arc_protsome_B"/>
    <property type="match status" value="1"/>
</dbReference>
<dbReference type="PANTHER" id="PTHR32194:SF0">
    <property type="entry name" value="ATP-DEPENDENT PROTEASE SUBUNIT HSLV"/>
    <property type="match status" value="1"/>
</dbReference>
<dbReference type="PANTHER" id="PTHR32194">
    <property type="entry name" value="METALLOPROTEASE TLDD"/>
    <property type="match status" value="1"/>
</dbReference>
<dbReference type="Pfam" id="PF00227">
    <property type="entry name" value="Proteasome"/>
    <property type="match status" value="1"/>
</dbReference>
<dbReference type="PRINTS" id="PR00141">
    <property type="entry name" value="PROTEASOME"/>
</dbReference>
<dbReference type="SUPFAM" id="SSF56235">
    <property type="entry name" value="N-terminal nucleophile aminohydrolases (Ntn hydrolases)"/>
    <property type="match status" value="1"/>
</dbReference>
<dbReference type="PROSITE" id="PS51476">
    <property type="entry name" value="PROTEASOME_BETA_2"/>
    <property type="match status" value="1"/>
</dbReference>
<feature type="propeptide" id="PRO_0000397306" description="Removed in mature form; by autocatalysis" evidence="1">
    <location>
        <begin position="1"/>
        <end position="39"/>
    </location>
</feature>
<feature type="chain" id="PRO_0000397307" description="Proteasome subunit beta">
    <location>
        <begin position="40"/>
        <end position="234"/>
    </location>
</feature>
<feature type="region of interest" description="Disordered" evidence="2">
    <location>
        <begin position="1"/>
        <end position="35"/>
    </location>
</feature>
<feature type="active site" description="Nucleophile" evidence="1">
    <location>
        <position position="40"/>
    </location>
</feature>